<name>VICTR_ARATH</name>
<proteinExistence type="evidence at protein level"/>
<comment type="function">
    <text evidence="1 4">Disease resistance protein of the TIR-NB-LRR-type. Part of the RPS6 locus that contains a cluster of several paralogous disease resistance (R) genes. Resistance proteins guard the plant against pathogens that contain an appropriate avirulence protein via an indirect interaction with this avirulence protein. That triggers a defense system including the hypersensitive response, which restricts the pathogen growth (By similarity). Required for [5-(3,4-dichlorophenyl)furan-2-yl]-piperidine-1-ylmethanethione-(DFPM-) induced root growth arrest due to reduced number of meristem cells in the division zone of the primary root and inhibition of abscisic acid- (ABA-) induced stomatal closing.</text>
</comment>
<comment type="catalytic activity">
    <reaction evidence="2">
        <text>NAD(+) + H2O = ADP-D-ribose + nicotinamide + H(+)</text>
        <dbReference type="Rhea" id="RHEA:16301"/>
        <dbReference type="ChEBI" id="CHEBI:15377"/>
        <dbReference type="ChEBI" id="CHEBI:15378"/>
        <dbReference type="ChEBI" id="CHEBI:17154"/>
        <dbReference type="ChEBI" id="CHEBI:57540"/>
        <dbReference type="ChEBI" id="CHEBI:57967"/>
        <dbReference type="EC" id="3.2.2.6"/>
    </reaction>
    <physiologicalReaction direction="left-to-right" evidence="2">
        <dbReference type="Rhea" id="RHEA:16302"/>
    </physiologicalReaction>
</comment>
<comment type="subunit">
    <text evidence="4">Part of a nuclear protein complex made of VICTR, PAD4 and EDS1. Interacts (via TIR domain) with PAD4 and EDS1.</text>
</comment>
<comment type="subcellular location">
    <subcellularLocation>
        <location evidence="4">Cytoplasm</location>
    </subcellularLocation>
    <subcellularLocation>
        <location evidence="4">Nucleus</location>
    </subcellularLocation>
</comment>
<comment type="induction">
    <text evidence="3 4">By DFPM in the root meristematic zone. Induced by salicylic acid (SA).</text>
</comment>
<comment type="domain">
    <text evidence="2">The TIR domain mediates NAD(+) hydrolase (NADase) activity. Self-association of TIR domains is required for NADase activity.</text>
</comment>
<comment type="disruption phenotype">
    <text evidence="4">Loss of [5-(3,4-dichlorophenyl)furan-2-yl]-piperidine-1-ylmethanethione- (DFPM-) induced root growth arrest and inhibition of stomatal closing mediated by abscisic acid (ABA).</text>
</comment>
<comment type="similarity">
    <text evidence="5">Belongs to the disease resistance NB-LRR family.</text>
</comment>
<comment type="sequence caution" evidence="5">
    <conflict type="erroneous gene model prediction">
        <sequence resource="EMBL-CDS" id="BAB10820"/>
    </conflict>
</comment>
<sequence length="1168" mass="132789">MASSSSSRNWVYDVFLSFSGKDVRVTFRSHFLKELDRKLISAFRDNEIERSHSLWPDLEQAIKDSRIAVVVFSKNYASSSWCLNELLEIVNCNDKIIIPVFYGVDPSQVRYQIGEFGSIFEKTCKRQTEEVKNQWKKALTDVANMLGFDSAKWDDEAKMIEEIANDVLAKLLLTSSTDSAENSIGIEDHIANMSVLLKLEAEEVRMVGIWGSSGIGKTTIARALFNQLSRHFPVSKFIDRAFVYKSRETYKGANPDDPNMKLHLQGCFLSEILGKKDIKIDHLGALGERLKHQKTLIIIDDLDDLVVLDSLVGKTNWFGCGSRIIVITNNKQFLRAHGIDHIYEVSLPSKERAQEMFCQSAFGENSPPEGFEELVVEIAWLAGSLPLGLTVFGSALRGRKKEYWVKMLPRLQNDLDGNIEETLKVSYDAIGNVKDQALFRLIACLFNHVKVRDIELLLADSGLDVNIALENLVDKSLIHVRNDHVEMHRLLQETGRNIVRSQSTDNPGEREFLVDSNDSRTVLSEGIGTRKVLGISLDTSKVSEFCVHENAFKGMGNLLFLDISSKTFIEEEVKVHLPEKINYYSVQPKQLIWDRFPLKCMPYTFLRNLVKLEMHDSKLEKLWEGAMSFTCLKELDMWASKYLKEIPDLSKATNIEKLDFGHCWSLVELPSSIRNLNKLLELNMEYCGELETLPTGFNLKSLDYLNFNECWKLRTFPEFATNISNLILAETSIEEYPSNLYFKNVRELSMGKADSDENKCQGVKPFMPMLSPTLTLLELWNIPNLVELSSSFQNLNNLERLDICYCRNLESLPTGINLESLVSLNLFGCSRLKRFPDISTNIKYLDLDQTGIEEVPWQIENFFNLTKLTMKGCRELKCVSLNIFKLKHLGEVSFSNCGALTRVDLSCYPSGVEMMKADNADIVSEETTSSLPDSCVLNVNFMDCVNLDREPVLHQQSIIFNSMILPGEEVPSYFTYRTSDSQPFGTSSSLPIPLLPTQLSQPFFRFRVCAVVSASNGVYIGVYSRFKGRIGNKFDSFGEVHNFMEIEKGIHLCIFDCRIRLYKDNVPLSQLNYDHVDINIHITSGDWRSTVVLKEWGIRLLETGSSAENRLGNPNSTLPHVSQAEEGNMGYYTHVQGLVNEIENSEDSGDNNVETERSKKRMRLHHFI</sequence>
<gene>
    <name type="primary">VICTR</name>
    <name type="ordered locus">At5g46520</name>
    <name type="ORF">K11I1.11</name>
</gene>
<evidence type="ECO:0000250" key="1"/>
<evidence type="ECO:0000255" key="2">
    <source>
        <dbReference type="PROSITE-ProRule" id="PRU00204"/>
    </source>
</evidence>
<evidence type="ECO:0000269" key="3">
    <source>
    </source>
</evidence>
<evidence type="ECO:0000269" key="4">
    <source>
    </source>
</evidence>
<evidence type="ECO:0000305" key="5"/>
<accession>F4KHI3</accession>
<accession>Q0WVG8</accession>
<accession>Q9FHF3</accession>
<keyword id="KW-0067">ATP-binding</keyword>
<keyword id="KW-0963">Cytoplasm</keyword>
<keyword id="KW-0378">Hydrolase</keyword>
<keyword id="KW-0433">Leucine-rich repeat</keyword>
<keyword id="KW-0520">NAD</keyword>
<keyword id="KW-0547">Nucleotide-binding</keyword>
<keyword id="KW-0539">Nucleus</keyword>
<keyword id="KW-0611">Plant defense</keyword>
<keyword id="KW-1185">Reference proteome</keyword>
<keyword id="KW-0677">Repeat</keyword>
<reference key="1">
    <citation type="journal article" date="2000" name="DNA Res.">
        <title>Structural analysis of Arabidopsis thaliana chromosome 5. X. Sequence features of the regions of 3,076,755 bp covered by sixty P1 and TAC clones.</title>
        <authorList>
            <person name="Sato S."/>
            <person name="Nakamura Y."/>
            <person name="Kaneko T."/>
            <person name="Katoh T."/>
            <person name="Asamizu E."/>
            <person name="Kotani H."/>
            <person name="Tabata S."/>
        </authorList>
    </citation>
    <scope>NUCLEOTIDE SEQUENCE [LARGE SCALE GENOMIC DNA]</scope>
    <source>
        <strain>cv. Columbia</strain>
    </source>
</reference>
<reference key="2">
    <citation type="journal article" date="2017" name="Plant J.">
        <title>Araport11: a complete reannotation of the Arabidopsis thaliana reference genome.</title>
        <authorList>
            <person name="Cheng C.Y."/>
            <person name="Krishnakumar V."/>
            <person name="Chan A.P."/>
            <person name="Thibaud-Nissen F."/>
            <person name="Schobel S."/>
            <person name="Town C.D."/>
        </authorList>
    </citation>
    <scope>GENOME REANNOTATION</scope>
    <source>
        <strain>cv. Columbia</strain>
    </source>
</reference>
<reference key="3">
    <citation type="submission" date="2006-07" db="EMBL/GenBank/DDBJ databases">
        <title>Large-scale analysis of RIKEN Arabidopsis full-length (RAFL) cDNAs.</title>
        <authorList>
            <person name="Totoki Y."/>
            <person name="Seki M."/>
            <person name="Ishida J."/>
            <person name="Nakajima M."/>
            <person name="Enju A."/>
            <person name="Kamiya A."/>
            <person name="Narusaka M."/>
            <person name="Shin-i T."/>
            <person name="Nakagawa M."/>
            <person name="Sakamoto N."/>
            <person name="Oishi K."/>
            <person name="Kohara Y."/>
            <person name="Kobayashi M."/>
            <person name="Toyoda A."/>
            <person name="Sakaki Y."/>
            <person name="Sakurai T."/>
            <person name="Iida K."/>
            <person name="Akiyama K."/>
            <person name="Satou M."/>
            <person name="Toyoda T."/>
            <person name="Konagaya A."/>
            <person name="Carninci P."/>
            <person name="Kawai J."/>
            <person name="Hayashizaki Y."/>
            <person name="Shinozaki K."/>
        </authorList>
    </citation>
    <scope>NUCLEOTIDE SEQUENCE [LARGE SCALE MRNA]</scope>
    <source>
        <strain>cv. Columbia</strain>
    </source>
</reference>
<reference key="4">
    <citation type="journal article" date="2003" name="Plant Cell">
        <title>Genome-wide analysis of NBS-LRR-encoding genes in Arabidopsis.</title>
        <authorList>
            <person name="Meyers B.C."/>
            <person name="Kozik A."/>
            <person name="Griego A."/>
            <person name="Kuang H."/>
            <person name="Michelmore R.W."/>
        </authorList>
    </citation>
    <scope>REVIEW</scope>
</reference>
<reference key="5">
    <citation type="journal article" date="2007" name="BMC Plant Biol.">
        <title>Global expression analysis of nucleotide binding site-leucine rich repeat-encoding and related genes in Arabidopsis.</title>
        <authorList>
            <person name="Tan X."/>
            <person name="Meyers B.C."/>
            <person name="Kozik A."/>
            <person name="West M.A."/>
            <person name="Morgante M."/>
            <person name="St Clair D.A."/>
            <person name="Bent A.F."/>
            <person name="Michelmore R.W."/>
        </authorList>
    </citation>
    <scope>INDUCTION BY SALICYLIC ACID</scope>
    <source>
        <strain>cv. Columbia</strain>
    </source>
</reference>
<reference key="6">
    <citation type="journal article" date="2012" name="Plant Cell">
        <title>Natural variation in small molecule-induced TIR-NB-LRR signaling induces root growth arrest via EDS1- and PAD4-complexed R protein VICTR in Arabidopsis.</title>
        <authorList>
            <person name="Kim T.H."/>
            <person name="Kunz H.H."/>
            <person name="Bhattacharjee S."/>
            <person name="Hauser F."/>
            <person name="Park J."/>
            <person name="Engineer C."/>
            <person name="Liu A."/>
            <person name="Ha T."/>
            <person name="Parker J.E."/>
            <person name="Gassmann W."/>
            <person name="Schroeder J.I."/>
        </authorList>
    </citation>
    <scope>FUNCTION</scope>
    <scope>DISRUPTION PHENOTYPE</scope>
    <scope>SUBCELLULAR LOCATION</scope>
    <scope>INTERACTION WITH PAD4 AND EDS1</scope>
    <scope>SUBUNIT</scope>
    <scope>INDUCTION BY DFPM</scope>
    <source>
        <strain>cv. Columbia</strain>
    </source>
</reference>
<feature type="chain" id="PRO_0000429489" description="Protein VARIATION IN COMPOUND TRIGGERED ROOT growth response">
    <location>
        <begin position="1"/>
        <end position="1168"/>
    </location>
</feature>
<feature type="domain" description="TIR" evidence="2">
    <location>
        <begin position="10"/>
        <end position="171"/>
    </location>
</feature>
<feature type="domain" description="NB-ARC">
    <location>
        <begin position="187"/>
        <end position="452"/>
    </location>
</feature>
<feature type="repeat" description="LRR 1">
    <location>
        <begin position="539"/>
        <end position="562"/>
    </location>
</feature>
<feature type="repeat" description="LRR 2">
    <location>
        <begin position="606"/>
        <end position="629"/>
    </location>
</feature>
<feature type="repeat" description="LRR 3">
    <location>
        <begin position="631"/>
        <end position="653"/>
    </location>
</feature>
<feature type="repeat" description="LRR 4">
    <location>
        <begin position="676"/>
        <end position="699"/>
    </location>
</feature>
<feature type="repeat" description="LRR 5">
    <location>
        <begin position="701"/>
        <end position="720"/>
    </location>
</feature>
<feature type="repeat" description="LRR 6">
    <location>
        <begin position="721"/>
        <end position="744"/>
    </location>
</feature>
<feature type="repeat" description="LRR 7">
    <location>
        <begin position="795"/>
        <end position="820"/>
    </location>
</feature>
<feature type="repeat" description="LRR 8">
    <location>
        <begin position="839"/>
        <end position="865"/>
    </location>
</feature>
<feature type="repeat" description="LRR 9">
    <location>
        <begin position="873"/>
        <end position="896"/>
    </location>
</feature>
<feature type="repeat" description="LRR 10">
    <location>
        <begin position="1065"/>
        <end position="1089"/>
    </location>
</feature>
<feature type="active site" evidence="2">
    <location>
        <position position="85"/>
    </location>
</feature>
<feature type="sequence conflict" description="In Ref. 3; BAE98880." evidence="5" ref="3">
    <original>E</original>
    <variation>V</variation>
    <location>
        <position position="511"/>
    </location>
</feature>
<dbReference type="EC" id="3.2.2.6" evidence="2"/>
<dbReference type="EMBL" id="AB019223">
    <property type="protein sequence ID" value="BAB10820.1"/>
    <property type="status" value="ALT_SEQ"/>
    <property type="molecule type" value="Genomic_DNA"/>
</dbReference>
<dbReference type="EMBL" id="CP002688">
    <property type="protein sequence ID" value="AED95394.1"/>
    <property type="molecule type" value="Genomic_DNA"/>
</dbReference>
<dbReference type="EMBL" id="AK226782">
    <property type="protein sequence ID" value="BAE98880.1"/>
    <property type="molecule type" value="mRNA"/>
</dbReference>
<dbReference type="RefSeq" id="NP_199464.2">
    <property type="nucleotide sequence ID" value="NM_124022.3"/>
</dbReference>
<dbReference type="SMR" id="F4KHI3"/>
<dbReference type="FunCoup" id="F4KHI3">
    <property type="interactions" value="5"/>
</dbReference>
<dbReference type="STRING" id="3702.F4KHI3"/>
<dbReference type="PaxDb" id="3702-AT5G46520.1"/>
<dbReference type="ProteomicsDB" id="243198"/>
<dbReference type="EnsemblPlants" id="AT5G46520.1">
    <property type="protein sequence ID" value="AT5G46520.1"/>
    <property type="gene ID" value="AT5G46520"/>
</dbReference>
<dbReference type="GeneID" id="834695"/>
<dbReference type="Gramene" id="AT5G46520.1">
    <property type="protein sequence ID" value="AT5G46520.1"/>
    <property type="gene ID" value="AT5G46520"/>
</dbReference>
<dbReference type="KEGG" id="ath:AT5G46520"/>
<dbReference type="Araport" id="AT5G46520"/>
<dbReference type="TAIR" id="AT5G46520">
    <property type="gene designation" value="VICTR"/>
</dbReference>
<dbReference type="HOGENOM" id="CLU_001561_0_1_1"/>
<dbReference type="InParanoid" id="F4KHI3"/>
<dbReference type="PRO" id="PR:F4KHI3"/>
<dbReference type="Proteomes" id="UP000006548">
    <property type="component" value="Chromosome 5"/>
</dbReference>
<dbReference type="ExpressionAtlas" id="F4KHI3">
    <property type="expression patterns" value="baseline and differential"/>
</dbReference>
<dbReference type="GO" id="GO:0005829">
    <property type="term" value="C:cytosol"/>
    <property type="evidence" value="ECO:0000314"/>
    <property type="project" value="TAIR"/>
</dbReference>
<dbReference type="GO" id="GO:0005634">
    <property type="term" value="C:nucleus"/>
    <property type="evidence" value="ECO:0000314"/>
    <property type="project" value="TAIR"/>
</dbReference>
<dbReference type="GO" id="GO:0043531">
    <property type="term" value="F:ADP binding"/>
    <property type="evidence" value="ECO:0007669"/>
    <property type="project" value="InterPro"/>
</dbReference>
<dbReference type="GO" id="GO:0005524">
    <property type="term" value="F:ATP binding"/>
    <property type="evidence" value="ECO:0007669"/>
    <property type="project" value="UniProtKB-KW"/>
</dbReference>
<dbReference type="GO" id="GO:0016887">
    <property type="term" value="F:ATP hydrolysis activity"/>
    <property type="evidence" value="ECO:0007669"/>
    <property type="project" value="InterPro"/>
</dbReference>
<dbReference type="GO" id="GO:0061809">
    <property type="term" value="F:NAD+ nucleosidase activity, cyclic ADP-ribose generating"/>
    <property type="evidence" value="ECO:0007669"/>
    <property type="project" value="UniProtKB-EC"/>
</dbReference>
<dbReference type="GO" id="GO:0006952">
    <property type="term" value="P:defense response"/>
    <property type="evidence" value="ECO:0007669"/>
    <property type="project" value="UniProtKB-KW"/>
</dbReference>
<dbReference type="GO" id="GO:0010082">
    <property type="term" value="P:regulation of root meristem growth"/>
    <property type="evidence" value="ECO:0000315"/>
    <property type="project" value="UniProtKB"/>
</dbReference>
<dbReference type="GO" id="GO:0007165">
    <property type="term" value="P:signal transduction"/>
    <property type="evidence" value="ECO:0007669"/>
    <property type="project" value="InterPro"/>
</dbReference>
<dbReference type="CDD" id="cd02019">
    <property type="entry name" value="NK"/>
    <property type="match status" value="1"/>
</dbReference>
<dbReference type="FunFam" id="1.10.8.430:FF:000002">
    <property type="entry name" value="Disease resistance protein (TIR-NBS-LRR class)"/>
    <property type="match status" value="1"/>
</dbReference>
<dbReference type="FunFam" id="3.40.50.10140:FF:000007">
    <property type="entry name" value="Disease resistance protein (TIR-NBS-LRR class)"/>
    <property type="match status" value="1"/>
</dbReference>
<dbReference type="FunFam" id="3.40.50.300:FF:001002">
    <property type="entry name" value="Disease resistance protein (TIR-NBS-LRR class)"/>
    <property type="match status" value="1"/>
</dbReference>
<dbReference type="FunFam" id="3.80.10.10:FF:000386">
    <property type="entry name" value="Disease resistance protein RPS4"/>
    <property type="match status" value="1"/>
</dbReference>
<dbReference type="Gene3D" id="1.10.8.430">
    <property type="entry name" value="Helical domain of apoptotic protease-activating factors"/>
    <property type="match status" value="1"/>
</dbReference>
<dbReference type="Gene3D" id="3.40.50.300">
    <property type="entry name" value="P-loop containing nucleotide triphosphate hydrolases"/>
    <property type="match status" value="1"/>
</dbReference>
<dbReference type="Gene3D" id="3.80.10.10">
    <property type="entry name" value="Ribonuclease Inhibitor"/>
    <property type="match status" value="2"/>
</dbReference>
<dbReference type="Gene3D" id="3.40.50.10140">
    <property type="entry name" value="Toll/interleukin-1 receptor homology (TIR) domain"/>
    <property type="match status" value="1"/>
</dbReference>
<dbReference type="InterPro" id="IPR003593">
    <property type="entry name" value="AAA+_ATPase"/>
</dbReference>
<dbReference type="InterPro" id="IPR042197">
    <property type="entry name" value="Apaf_helical"/>
</dbReference>
<dbReference type="InterPro" id="IPR044974">
    <property type="entry name" value="Disease_R_plants"/>
</dbReference>
<dbReference type="InterPro" id="IPR011713">
    <property type="entry name" value="Leu-rich_rpt_3"/>
</dbReference>
<dbReference type="InterPro" id="IPR032675">
    <property type="entry name" value="LRR_dom_sf"/>
</dbReference>
<dbReference type="InterPro" id="IPR002182">
    <property type="entry name" value="NB-ARC"/>
</dbReference>
<dbReference type="InterPro" id="IPR027417">
    <property type="entry name" value="P-loop_NTPase"/>
</dbReference>
<dbReference type="InterPro" id="IPR000157">
    <property type="entry name" value="TIR_dom"/>
</dbReference>
<dbReference type="InterPro" id="IPR035897">
    <property type="entry name" value="Toll_tir_struct_dom_sf"/>
</dbReference>
<dbReference type="InterPro" id="IPR036390">
    <property type="entry name" value="WH_DNA-bd_sf"/>
</dbReference>
<dbReference type="PANTHER" id="PTHR11017:SF228">
    <property type="entry name" value="ADP-RIBOSYL CYCLASE_CYCLIC ADP-RIBOSE HYDROLASE-RELATED"/>
    <property type="match status" value="1"/>
</dbReference>
<dbReference type="PANTHER" id="PTHR11017">
    <property type="entry name" value="LEUCINE-RICH REPEAT-CONTAINING PROTEIN"/>
    <property type="match status" value="1"/>
</dbReference>
<dbReference type="Pfam" id="PF07725">
    <property type="entry name" value="LRR_3"/>
    <property type="match status" value="1"/>
</dbReference>
<dbReference type="Pfam" id="PF00931">
    <property type="entry name" value="NB-ARC"/>
    <property type="match status" value="1"/>
</dbReference>
<dbReference type="Pfam" id="PF01582">
    <property type="entry name" value="TIR"/>
    <property type="match status" value="1"/>
</dbReference>
<dbReference type="Pfam" id="PF23282">
    <property type="entry name" value="WHD_ROQ1"/>
    <property type="match status" value="1"/>
</dbReference>
<dbReference type="PRINTS" id="PR00364">
    <property type="entry name" value="DISEASERSIST"/>
</dbReference>
<dbReference type="SMART" id="SM00382">
    <property type="entry name" value="AAA"/>
    <property type="match status" value="1"/>
</dbReference>
<dbReference type="SMART" id="SM00255">
    <property type="entry name" value="TIR"/>
    <property type="match status" value="1"/>
</dbReference>
<dbReference type="SUPFAM" id="SSF52058">
    <property type="entry name" value="L domain-like"/>
    <property type="match status" value="1"/>
</dbReference>
<dbReference type="SUPFAM" id="SSF52540">
    <property type="entry name" value="P-loop containing nucleoside triphosphate hydrolases"/>
    <property type="match status" value="1"/>
</dbReference>
<dbReference type="SUPFAM" id="SSF52200">
    <property type="entry name" value="Toll/Interleukin receptor TIR domain"/>
    <property type="match status" value="1"/>
</dbReference>
<dbReference type="SUPFAM" id="SSF46785">
    <property type="entry name" value="Winged helix' DNA-binding domain"/>
    <property type="match status" value="1"/>
</dbReference>
<dbReference type="PROSITE" id="PS50104">
    <property type="entry name" value="TIR"/>
    <property type="match status" value="1"/>
</dbReference>
<organism>
    <name type="scientific">Arabidopsis thaliana</name>
    <name type="common">Mouse-ear cress</name>
    <dbReference type="NCBI Taxonomy" id="3702"/>
    <lineage>
        <taxon>Eukaryota</taxon>
        <taxon>Viridiplantae</taxon>
        <taxon>Streptophyta</taxon>
        <taxon>Embryophyta</taxon>
        <taxon>Tracheophyta</taxon>
        <taxon>Spermatophyta</taxon>
        <taxon>Magnoliopsida</taxon>
        <taxon>eudicotyledons</taxon>
        <taxon>Gunneridae</taxon>
        <taxon>Pentapetalae</taxon>
        <taxon>rosids</taxon>
        <taxon>malvids</taxon>
        <taxon>Brassicales</taxon>
        <taxon>Brassicaceae</taxon>
        <taxon>Camelineae</taxon>
        <taxon>Arabidopsis</taxon>
    </lineage>
</organism>
<protein>
    <recommendedName>
        <fullName>Protein VARIATION IN COMPOUND TRIGGERED ROOT growth response</fullName>
        <ecNumber evidence="2">3.2.2.6</ecNumber>
    </recommendedName>
</protein>